<dbReference type="EC" id="3.6.5.3" evidence="2"/>
<dbReference type="EMBL" id="CP000109">
    <property type="protein sequence ID" value="ABB40877.1"/>
    <property type="molecule type" value="Genomic_DNA"/>
</dbReference>
<dbReference type="EMBL" id="CP000109">
    <property type="protein sequence ID" value="ABB40889.1"/>
    <property type="molecule type" value="Genomic_DNA"/>
</dbReference>
<dbReference type="SMR" id="Q31IY4"/>
<dbReference type="STRING" id="317025.Tcr_0281"/>
<dbReference type="KEGG" id="tcx:Tcr_0281"/>
<dbReference type="KEGG" id="tcx:Tcr_0293"/>
<dbReference type="eggNOG" id="COG0050">
    <property type="taxonomic scope" value="Bacteria"/>
</dbReference>
<dbReference type="HOGENOM" id="CLU_007265_0_0_6"/>
<dbReference type="OrthoDB" id="9803139at2"/>
<dbReference type="GO" id="GO:0005829">
    <property type="term" value="C:cytosol"/>
    <property type="evidence" value="ECO:0007669"/>
    <property type="project" value="TreeGrafter"/>
</dbReference>
<dbReference type="GO" id="GO:0005525">
    <property type="term" value="F:GTP binding"/>
    <property type="evidence" value="ECO:0007669"/>
    <property type="project" value="UniProtKB-UniRule"/>
</dbReference>
<dbReference type="GO" id="GO:0003924">
    <property type="term" value="F:GTPase activity"/>
    <property type="evidence" value="ECO:0007669"/>
    <property type="project" value="InterPro"/>
</dbReference>
<dbReference type="GO" id="GO:0097216">
    <property type="term" value="F:guanosine tetraphosphate binding"/>
    <property type="evidence" value="ECO:0007669"/>
    <property type="project" value="UniProtKB-ARBA"/>
</dbReference>
<dbReference type="GO" id="GO:0003746">
    <property type="term" value="F:translation elongation factor activity"/>
    <property type="evidence" value="ECO:0007669"/>
    <property type="project" value="UniProtKB-UniRule"/>
</dbReference>
<dbReference type="CDD" id="cd01884">
    <property type="entry name" value="EF_Tu"/>
    <property type="match status" value="1"/>
</dbReference>
<dbReference type="CDD" id="cd03697">
    <property type="entry name" value="EFTU_II"/>
    <property type="match status" value="1"/>
</dbReference>
<dbReference type="CDD" id="cd03707">
    <property type="entry name" value="EFTU_III"/>
    <property type="match status" value="1"/>
</dbReference>
<dbReference type="FunFam" id="2.40.30.10:FF:000001">
    <property type="entry name" value="Elongation factor Tu"/>
    <property type="match status" value="1"/>
</dbReference>
<dbReference type="FunFam" id="3.40.50.300:FF:000003">
    <property type="entry name" value="Elongation factor Tu"/>
    <property type="match status" value="1"/>
</dbReference>
<dbReference type="Gene3D" id="3.40.50.300">
    <property type="entry name" value="P-loop containing nucleotide triphosphate hydrolases"/>
    <property type="match status" value="1"/>
</dbReference>
<dbReference type="Gene3D" id="2.40.30.10">
    <property type="entry name" value="Translation factors"/>
    <property type="match status" value="2"/>
</dbReference>
<dbReference type="HAMAP" id="MF_00118_B">
    <property type="entry name" value="EF_Tu_B"/>
    <property type="match status" value="1"/>
</dbReference>
<dbReference type="InterPro" id="IPR041709">
    <property type="entry name" value="EF-Tu_GTP-bd"/>
</dbReference>
<dbReference type="InterPro" id="IPR050055">
    <property type="entry name" value="EF-Tu_GTPase"/>
</dbReference>
<dbReference type="InterPro" id="IPR004161">
    <property type="entry name" value="EFTu-like_2"/>
</dbReference>
<dbReference type="InterPro" id="IPR033720">
    <property type="entry name" value="EFTU_2"/>
</dbReference>
<dbReference type="InterPro" id="IPR031157">
    <property type="entry name" value="G_TR_CS"/>
</dbReference>
<dbReference type="InterPro" id="IPR027417">
    <property type="entry name" value="P-loop_NTPase"/>
</dbReference>
<dbReference type="InterPro" id="IPR005225">
    <property type="entry name" value="Small_GTP-bd"/>
</dbReference>
<dbReference type="InterPro" id="IPR000795">
    <property type="entry name" value="T_Tr_GTP-bd_dom"/>
</dbReference>
<dbReference type="InterPro" id="IPR009000">
    <property type="entry name" value="Transl_B-barrel_sf"/>
</dbReference>
<dbReference type="InterPro" id="IPR009001">
    <property type="entry name" value="Transl_elong_EF1A/Init_IF2_C"/>
</dbReference>
<dbReference type="InterPro" id="IPR004541">
    <property type="entry name" value="Transl_elong_EFTu/EF1A_bac/org"/>
</dbReference>
<dbReference type="InterPro" id="IPR004160">
    <property type="entry name" value="Transl_elong_EFTu/EF1A_C"/>
</dbReference>
<dbReference type="NCBIfam" id="TIGR00485">
    <property type="entry name" value="EF-Tu"/>
    <property type="match status" value="1"/>
</dbReference>
<dbReference type="NCBIfam" id="NF000766">
    <property type="entry name" value="PRK00049.1"/>
    <property type="match status" value="1"/>
</dbReference>
<dbReference type="NCBIfam" id="NF009372">
    <property type="entry name" value="PRK12735.1"/>
    <property type="match status" value="1"/>
</dbReference>
<dbReference type="NCBIfam" id="NF009373">
    <property type="entry name" value="PRK12736.1"/>
    <property type="match status" value="1"/>
</dbReference>
<dbReference type="NCBIfam" id="TIGR00231">
    <property type="entry name" value="small_GTP"/>
    <property type="match status" value="1"/>
</dbReference>
<dbReference type="PANTHER" id="PTHR43721:SF22">
    <property type="entry name" value="ELONGATION FACTOR TU, MITOCHONDRIAL"/>
    <property type="match status" value="1"/>
</dbReference>
<dbReference type="PANTHER" id="PTHR43721">
    <property type="entry name" value="ELONGATION FACTOR TU-RELATED"/>
    <property type="match status" value="1"/>
</dbReference>
<dbReference type="Pfam" id="PF00009">
    <property type="entry name" value="GTP_EFTU"/>
    <property type="match status" value="1"/>
</dbReference>
<dbReference type="Pfam" id="PF03144">
    <property type="entry name" value="GTP_EFTU_D2"/>
    <property type="match status" value="1"/>
</dbReference>
<dbReference type="Pfam" id="PF03143">
    <property type="entry name" value="GTP_EFTU_D3"/>
    <property type="match status" value="1"/>
</dbReference>
<dbReference type="PRINTS" id="PR00315">
    <property type="entry name" value="ELONGATNFCT"/>
</dbReference>
<dbReference type="SUPFAM" id="SSF50465">
    <property type="entry name" value="EF-Tu/eEF-1alpha/eIF2-gamma C-terminal domain"/>
    <property type="match status" value="1"/>
</dbReference>
<dbReference type="SUPFAM" id="SSF52540">
    <property type="entry name" value="P-loop containing nucleoside triphosphate hydrolases"/>
    <property type="match status" value="1"/>
</dbReference>
<dbReference type="SUPFAM" id="SSF50447">
    <property type="entry name" value="Translation proteins"/>
    <property type="match status" value="1"/>
</dbReference>
<dbReference type="PROSITE" id="PS00301">
    <property type="entry name" value="G_TR_1"/>
    <property type="match status" value="1"/>
</dbReference>
<dbReference type="PROSITE" id="PS51722">
    <property type="entry name" value="G_TR_2"/>
    <property type="match status" value="1"/>
</dbReference>
<comment type="function">
    <text evidence="2">GTP hydrolase that promotes the GTP-dependent binding of aminoacyl-tRNA to the A-site of ribosomes during protein biosynthesis.</text>
</comment>
<comment type="catalytic activity">
    <reaction evidence="2">
        <text>GTP + H2O = GDP + phosphate + H(+)</text>
        <dbReference type="Rhea" id="RHEA:19669"/>
        <dbReference type="ChEBI" id="CHEBI:15377"/>
        <dbReference type="ChEBI" id="CHEBI:15378"/>
        <dbReference type="ChEBI" id="CHEBI:37565"/>
        <dbReference type="ChEBI" id="CHEBI:43474"/>
        <dbReference type="ChEBI" id="CHEBI:58189"/>
        <dbReference type="EC" id="3.6.5.3"/>
    </reaction>
    <physiologicalReaction direction="left-to-right" evidence="2">
        <dbReference type="Rhea" id="RHEA:19670"/>
    </physiologicalReaction>
</comment>
<comment type="subunit">
    <text evidence="2">Monomer.</text>
</comment>
<comment type="subcellular location">
    <subcellularLocation>
        <location evidence="2">Cytoplasm</location>
    </subcellularLocation>
</comment>
<comment type="similarity">
    <text evidence="2">Belongs to the TRAFAC class translation factor GTPase superfamily. Classic translation factor GTPase family. EF-Tu/EF-1A subfamily.</text>
</comment>
<name>EFTU_HYDCU</name>
<keyword id="KW-0963">Cytoplasm</keyword>
<keyword id="KW-0251">Elongation factor</keyword>
<keyword id="KW-0342">GTP-binding</keyword>
<keyword id="KW-0378">Hydrolase</keyword>
<keyword id="KW-0460">Magnesium</keyword>
<keyword id="KW-0479">Metal-binding</keyword>
<keyword id="KW-0547">Nucleotide-binding</keyword>
<keyword id="KW-0648">Protein biosynthesis</keyword>
<reference key="1">
    <citation type="journal article" date="2006" name="PLoS Biol.">
        <title>The genome of deep-sea vent chemolithoautotroph Thiomicrospira crunogena XCL-2.</title>
        <authorList>
            <person name="Scott K.M."/>
            <person name="Sievert S.M."/>
            <person name="Abril F.N."/>
            <person name="Ball L.A."/>
            <person name="Barrett C.J."/>
            <person name="Blake R.A."/>
            <person name="Boller A.J."/>
            <person name="Chain P.S.G."/>
            <person name="Clark J.A."/>
            <person name="Davis C.R."/>
            <person name="Detter C."/>
            <person name="Do K.F."/>
            <person name="Dobrinski K.P."/>
            <person name="Faza B.I."/>
            <person name="Fitzpatrick K.A."/>
            <person name="Freyermuth S.K."/>
            <person name="Harmer T.L."/>
            <person name="Hauser L.J."/>
            <person name="Huegler M."/>
            <person name="Kerfeld C.A."/>
            <person name="Klotz M.G."/>
            <person name="Kong W.W."/>
            <person name="Land M."/>
            <person name="Lapidus A."/>
            <person name="Larimer F.W."/>
            <person name="Longo D.L."/>
            <person name="Lucas S."/>
            <person name="Malfatti S.A."/>
            <person name="Massey S.E."/>
            <person name="Martin D.D."/>
            <person name="McCuddin Z."/>
            <person name="Meyer F."/>
            <person name="Moore J.L."/>
            <person name="Ocampo L.H. Jr."/>
            <person name="Paul J.H."/>
            <person name="Paulsen I.T."/>
            <person name="Reep D.K."/>
            <person name="Ren Q."/>
            <person name="Ross R.L."/>
            <person name="Sato P.Y."/>
            <person name="Thomas P."/>
            <person name="Tinkham L.E."/>
            <person name="Zeruth G.T."/>
        </authorList>
    </citation>
    <scope>NUCLEOTIDE SEQUENCE [LARGE SCALE GENOMIC DNA]</scope>
    <source>
        <strain>DSM 25203 / XCL-2</strain>
    </source>
</reference>
<sequence>MAKEKFERSKPHVNVGTIGHVDHGKTTLTAALTIVQGKKFGGDSKDYASIDNAPEERERGITISTAHVEYESETRHYAHVDCPGHADYVKNMITGAAQMDGAILVCSAADGPMPQTREHILLSRQVGVPYIVVYLNKADMVDDEELLELVEMEVRELLDTYDFPGDDTPVIMGSALKAIEGDQSEIGEPSIGRLVDALDSYIPEPTRETDKPFLMPVEDIFSIQGRGTVATGRVETGVVKVGEEIEIVGIRPTTTTTVTGVEMFRKLLDQGEAGDNVGILLRGTKREDIERGQVLAHKGTVTPHTKFEAEVYVLSKDEGGRHTPFFQGYRPQFYFRTTDVTGACELPAGTEMVMPGDNVQMTVELINPIAMNEGLRFAIREGGRTVGAGVVAKIID</sequence>
<accession>Q31IY4</accession>
<protein>
    <recommendedName>
        <fullName evidence="2">Elongation factor Tu</fullName>
        <shortName evidence="2">EF-Tu</shortName>
        <ecNumber evidence="2">3.6.5.3</ecNumber>
    </recommendedName>
</protein>
<feature type="chain" id="PRO_0000337564" description="Elongation factor Tu">
    <location>
        <begin position="1"/>
        <end position="396"/>
    </location>
</feature>
<feature type="domain" description="tr-type G">
    <location>
        <begin position="10"/>
        <end position="206"/>
    </location>
</feature>
<feature type="region of interest" description="G1" evidence="1">
    <location>
        <begin position="19"/>
        <end position="26"/>
    </location>
</feature>
<feature type="region of interest" description="G2" evidence="1">
    <location>
        <begin position="60"/>
        <end position="64"/>
    </location>
</feature>
<feature type="region of interest" description="G3" evidence="1">
    <location>
        <begin position="81"/>
        <end position="84"/>
    </location>
</feature>
<feature type="region of interest" description="G4" evidence="1">
    <location>
        <begin position="136"/>
        <end position="139"/>
    </location>
</feature>
<feature type="region of interest" description="G5" evidence="1">
    <location>
        <begin position="174"/>
        <end position="176"/>
    </location>
</feature>
<feature type="binding site" evidence="2">
    <location>
        <begin position="19"/>
        <end position="26"/>
    </location>
    <ligand>
        <name>GTP</name>
        <dbReference type="ChEBI" id="CHEBI:37565"/>
    </ligand>
</feature>
<feature type="binding site" evidence="2">
    <location>
        <position position="26"/>
    </location>
    <ligand>
        <name>Mg(2+)</name>
        <dbReference type="ChEBI" id="CHEBI:18420"/>
    </ligand>
</feature>
<feature type="binding site" evidence="2">
    <location>
        <begin position="81"/>
        <end position="85"/>
    </location>
    <ligand>
        <name>GTP</name>
        <dbReference type="ChEBI" id="CHEBI:37565"/>
    </ligand>
</feature>
<feature type="binding site" evidence="2">
    <location>
        <begin position="136"/>
        <end position="139"/>
    </location>
    <ligand>
        <name>GTP</name>
        <dbReference type="ChEBI" id="CHEBI:37565"/>
    </ligand>
</feature>
<proteinExistence type="inferred from homology"/>
<gene>
    <name evidence="2" type="primary">tuf1</name>
    <name type="ordered locus">Tcr_0281</name>
</gene>
<gene>
    <name evidence="2" type="primary">tuf2</name>
    <name type="ordered locus">Tcr_0293</name>
</gene>
<organism>
    <name type="scientific">Hydrogenovibrio crunogenus (strain DSM 25203 / XCL-2)</name>
    <name type="common">Thiomicrospira crunogena</name>
    <dbReference type="NCBI Taxonomy" id="317025"/>
    <lineage>
        <taxon>Bacteria</taxon>
        <taxon>Pseudomonadati</taxon>
        <taxon>Pseudomonadota</taxon>
        <taxon>Gammaproteobacteria</taxon>
        <taxon>Thiotrichales</taxon>
        <taxon>Piscirickettsiaceae</taxon>
        <taxon>Hydrogenovibrio</taxon>
    </lineage>
</organism>
<evidence type="ECO:0000250" key="1"/>
<evidence type="ECO:0000255" key="2">
    <source>
        <dbReference type="HAMAP-Rule" id="MF_00118"/>
    </source>
</evidence>